<comment type="function">
    <text evidence="1">Catalyzes the methyl esterification of L-isoaspartyl residues in peptides and proteins that result from spontaneous decomposition of normal L-aspartyl and L-asparaginyl residues. It plays a role in the repair and/or degradation of damaged proteins.</text>
</comment>
<comment type="catalytic activity">
    <reaction evidence="1">
        <text>[protein]-L-isoaspartate + S-adenosyl-L-methionine = [protein]-L-isoaspartate alpha-methyl ester + S-adenosyl-L-homocysteine</text>
        <dbReference type="Rhea" id="RHEA:12705"/>
        <dbReference type="Rhea" id="RHEA-COMP:12143"/>
        <dbReference type="Rhea" id="RHEA-COMP:12144"/>
        <dbReference type="ChEBI" id="CHEBI:57856"/>
        <dbReference type="ChEBI" id="CHEBI:59789"/>
        <dbReference type="ChEBI" id="CHEBI:90596"/>
        <dbReference type="ChEBI" id="CHEBI:90598"/>
        <dbReference type="EC" id="2.1.1.77"/>
    </reaction>
</comment>
<comment type="subcellular location">
    <subcellularLocation>
        <location evidence="1">Cytoplasm</location>
    </subcellularLocation>
</comment>
<comment type="similarity">
    <text evidence="1">Belongs to the methyltransferase superfamily. L-isoaspartyl/D-aspartyl protein methyltransferase family.</text>
</comment>
<name>PIMT_YERE8</name>
<proteinExistence type="inferred from homology"/>
<gene>
    <name evidence="1" type="primary">pcm</name>
    <name type="ordered locus">YE0773</name>
</gene>
<feature type="chain" id="PRO_1000004831" description="Protein-L-isoaspartate O-methyltransferase">
    <location>
        <begin position="1"/>
        <end position="208"/>
    </location>
</feature>
<feature type="active site" evidence="1">
    <location>
        <position position="59"/>
    </location>
</feature>
<accession>A1JJT8</accession>
<organism>
    <name type="scientific">Yersinia enterocolitica serotype O:8 / biotype 1B (strain NCTC 13174 / 8081)</name>
    <dbReference type="NCBI Taxonomy" id="393305"/>
    <lineage>
        <taxon>Bacteria</taxon>
        <taxon>Pseudomonadati</taxon>
        <taxon>Pseudomonadota</taxon>
        <taxon>Gammaproteobacteria</taxon>
        <taxon>Enterobacterales</taxon>
        <taxon>Yersiniaceae</taxon>
        <taxon>Yersinia</taxon>
    </lineage>
</organism>
<keyword id="KW-0963">Cytoplasm</keyword>
<keyword id="KW-0489">Methyltransferase</keyword>
<keyword id="KW-0949">S-adenosyl-L-methionine</keyword>
<keyword id="KW-0808">Transferase</keyword>
<dbReference type="EC" id="2.1.1.77" evidence="1"/>
<dbReference type="EMBL" id="AM286415">
    <property type="protein sequence ID" value="CAL10875.1"/>
    <property type="molecule type" value="Genomic_DNA"/>
</dbReference>
<dbReference type="RefSeq" id="WP_005167299.1">
    <property type="nucleotide sequence ID" value="NC_008800.1"/>
</dbReference>
<dbReference type="RefSeq" id="YP_001005114.1">
    <property type="nucleotide sequence ID" value="NC_008800.1"/>
</dbReference>
<dbReference type="SMR" id="A1JJT8"/>
<dbReference type="KEGG" id="yen:YE0773"/>
<dbReference type="PATRIC" id="fig|393305.7.peg.866"/>
<dbReference type="eggNOG" id="COG2518">
    <property type="taxonomic scope" value="Bacteria"/>
</dbReference>
<dbReference type="HOGENOM" id="CLU_055432_2_0_6"/>
<dbReference type="OrthoDB" id="9810066at2"/>
<dbReference type="Proteomes" id="UP000000642">
    <property type="component" value="Chromosome"/>
</dbReference>
<dbReference type="GO" id="GO:0005737">
    <property type="term" value="C:cytoplasm"/>
    <property type="evidence" value="ECO:0007669"/>
    <property type="project" value="UniProtKB-SubCell"/>
</dbReference>
<dbReference type="GO" id="GO:0004719">
    <property type="term" value="F:protein-L-isoaspartate (D-aspartate) O-methyltransferase activity"/>
    <property type="evidence" value="ECO:0007669"/>
    <property type="project" value="UniProtKB-UniRule"/>
</dbReference>
<dbReference type="GO" id="GO:0032259">
    <property type="term" value="P:methylation"/>
    <property type="evidence" value="ECO:0007669"/>
    <property type="project" value="UniProtKB-KW"/>
</dbReference>
<dbReference type="GO" id="GO:0036211">
    <property type="term" value="P:protein modification process"/>
    <property type="evidence" value="ECO:0007669"/>
    <property type="project" value="UniProtKB-UniRule"/>
</dbReference>
<dbReference type="GO" id="GO:0030091">
    <property type="term" value="P:protein repair"/>
    <property type="evidence" value="ECO:0007669"/>
    <property type="project" value="UniProtKB-UniRule"/>
</dbReference>
<dbReference type="CDD" id="cd02440">
    <property type="entry name" value="AdoMet_MTases"/>
    <property type="match status" value="1"/>
</dbReference>
<dbReference type="FunFam" id="3.40.50.150:FF:000010">
    <property type="entry name" value="Protein-L-isoaspartate O-methyltransferase"/>
    <property type="match status" value="1"/>
</dbReference>
<dbReference type="Gene3D" id="3.40.50.150">
    <property type="entry name" value="Vaccinia Virus protein VP39"/>
    <property type="match status" value="1"/>
</dbReference>
<dbReference type="HAMAP" id="MF_00090">
    <property type="entry name" value="PIMT"/>
    <property type="match status" value="1"/>
</dbReference>
<dbReference type="InterPro" id="IPR000682">
    <property type="entry name" value="PCMT"/>
</dbReference>
<dbReference type="InterPro" id="IPR029063">
    <property type="entry name" value="SAM-dependent_MTases_sf"/>
</dbReference>
<dbReference type="NCBIfam" id="TIGR00080">
    <property type="entry name" value="pimt"/>
    <property type="match status" value="1"/>
</dbReference>
<dbReference type="NCBIfam" id="NF001453">
    <property type="entry name" value="PRK00312.1"/>
    <property type="match status" value="1"/>
</dbReference>
<dbReference type="PANTHER" id="PTHR11579">
    <property type="entry name" value="PROTEIN-L-ISOASPARTATE O-METHYLTRANSFERASE"/>
    <property type="match status" value="1"/>
</dbReference>
<dbReference type="PANTHER" id="PTHR11579:SF0">
    <property type="entry name" value="PROTEIN-L-ISOASPARTATE(D-ASPARTATE) O-METHYLTRANSFERASE"/>
    <property type="match status" value="1"/>
</dbReference>
<dbReference type="Pfam" id="PF01135">
    <property type="entry name" value="PCMT"/>
    <property type="match status" value="1"/>
</dbReference>
<dbReference type="SUPFAM" id="SSF53335">
    <property type="entry name" value="S-adenosyl-L-methionine-dependent methyltransferases"/>
    <property type="match status" value="1"/>
</dbReference>
<dbReference type="PROSITE" id="PS01279">
    <property type="entry name" value="PCMT"/>
    <property type="match status" value="1"/>
</dbReference>
<sequence>MVNKRMQTLLMQLRQQGIQDERLLQALEAVPRERFVDEALSHKAYENTALPIGSGQTISQPYMVARMTELLQLTPTSRVLEIGTGSGYQTAILAHLVEHVCSVERIKGLQWQAKRRLKQLDLHNVSTRHGDGWLGWASRGPFDAIIVTAAPPEIPNALLEQLDEGGILVLPVGEQAQTLKCVQRRNNEFKVETVEAVRFVPLVKGELA</sequence>
<evidence type="ECO:0000255" key="1">
    <source>
        <dbReference type="HAMAP-Rule" id="MF_00090"/>
    </source>
</evidence>
<reference key="1">
    <citation type="journal article" date="2006" name="PLoS Genet.">
        <title>The complete genome sequence and comparative genome analysis of the high pathogenicity Yersinia enterocolitica strain 8081.</title>
        <authorList>
            <person name="Thomson N.R."/>
            <person name="Howard S."/>
            <person name="Wren B.W."/>
            <person name="Holden M.T.G."/>
            <person name="Crossman L."/>
            <person name="Challis G.L."/>
            <person name="Churcher C."/>
            <person name="Mungall K."/>
            <person name="Brooks K."/>
            <person name="Chillingworth T."/>
            <person name="Feltwell T."/>
            <person name="Abdellah Z."/>
            <person name="Hauser H."/>
            <person name="Jagels K."/>
            <person name="Maddison M."/>
            <person name="Moule S."/>
            <person name="Sanders M."/>
            <person name="Whitehead S."/>
            <person name="Quail M.A."/>
            <person name="Dougan G."/>
            <person name="Parkhill J."/>
            <person name="Prentice M.B."/>
        </authorList>
    </citation>
    <scope>NUCLEOTIDE SEQUENCE [LARGE SCALE GENOMIC DNA]</scope>
    <source>
        <strain>NCTC 13174 / 8081</strain>
    </source>
</reference>
<protein>
    <recommendedName>
        <fullName evidence="1">Protein-L-isoaspartate O-methyltransferase</fullName>
        <ecNumber evidence="1">2.1.1.77</ecNumber>
    </recommendedName>
    <alternativeName>
        <fullName evidence="1">L-isoaspartyl protein carboxyl methyltransferase</fullName>
    </alternativeName>
    <alternativeName>
        <fullName evidence="1">Protein L-isoaspartyl methyltransferase</fullName>
    </alternativeName>
    <alternativeName>
        <fullName evidence="1">Protein-beta-aspartate methyltransferase</fullName>
        <shortName evidence="1">PIMT</shortName>
    </alternativeName>
</protein>